<sequence length="440" mass="49715">MEQPQEETPEAREEEKEEVAMGDGAPELNGGPEHTLPSSSCADLSQNSSPSSLLDQLQMGCDGASGGSLNMECRVCGDKASGFHYGVHACEGCKGFFRRTIRMKLEYEKCDRICKIQKKNRNKCQYCRFQKCLALGMSHNAIRFGRMPEAEKRKLVAGLTASEGCQHNPQLADLKAFSKHIYNAYLKNFNMTKKKARSILTGKSSHNAPFVIHDIETLWQAEKGLVWKQLVNGLPPYNEISVHVFYRCQSTTVETVRELTEFAKNIPNFSSLFLNDQVTLLKYGVHEAIFAMLASIVNKDGLLVANGSGFVTHEFLRSLRKPFSDIIEPKFEFAVKFNALELDDSDLALFIAAIILCGDRPGLMNVPQVEAIQDTILRALEFHLQVNHPDSQYLFPKLLQKMADLRQLVTEHAQMMQWLKKTESETLLHPLLQEIYKDMY</sequence>
<proteinExistence type="evidence at protein level"/>
<feature type="chain" id="PRO_0000053487" description="Peroxisome proliferator-activated receptor delta">
    <location>
        <begin position="1"/>
        <end position="440"/>
    </location>
</feature>
<feature type="domain" description="NR LBD" evidence="3">
    <location>
        <begin position="210"/>
        <end position="438"/>
    </location>
</feature>
<feature type="DNA-binding region" description="Nuclear receptor" evidence="2">
    <location>
        <begin position="70"/>
        <end position="144"/>
    </location>
</feature>
<feature type="zinc finger region" description="NR C4-type" evidence="2">
    <location>
        <begin position="73"/>
        <end position="93"/>
    </location>
</feature>
<feature type="zinc finger region" description="NR C4-type" evidence="2">
    <location>
        <begin position="110"/>
        <end position="132"/>
    </location>
</feature>
<feature type="region of interest" description="Disordered" evidence="4">
    <location>
        <begin position="1"/>
        <end position="53"/>
    </location>
</feature>
<feature type="compositionally biased region" description="Polar residues" evidence="4">
    <location>
        <begin position="36"/>
        <end position="53"/>
    </location>
</feature>
<feature type="sequence conflict" description="In Ref. 2; AAA19972." evidence="8" ref="2">
    <original>EA</original>
    <variation>DG</variation>
    <location>
        <begin position="149"/>
        <end position="150"/>
    </location>
</feature>
<organism>
    <name type="scientific">Mus musculus</name>
    <name type="common">Mouse</name>
    <dbReference type="NCBI Taxonomy" id="10090"/>
    <lineage>
        <taxon>Eukaryota</taxon>
        <taxon>Metazoa</taxon>
        <taxon>Chordata</taxon>
        <taxon>Craniata</taxon>
        <taxon>Vertebrata</taxon>
        <taxon>Euteleostomi</taxon>
        <taxon>Mammalia</taxon>
        <taxon>Eutheria</taxon>
        <taxon>Euarchontoglires</taxon>
        <taxon>Glires</taxon>
        <taxon>Rodentia</taxon>
        <taxon>Myomorpha</taxon>
        <taxon>Muroidea</taxon>
        <taxon>Muridae</taxon>
        <taxon>Murinae</taxon>
        <taxon>Mus</taxon>
        <taxon>Mus</taxon>
    </lineage>
</organism>
<accession>P35396</accession>
<accession>P37239</accession>
<protein>
    <recommendedName>
        <fullName>Peroxisome proliferator-activated receptor delta</fullName>
        <shortName>PPAR-delta</shortName>
    </recommendedName>
    <alternativeName>
        <fullName>Nuclear hormone receptor 1</fullName>
        <shortName>NUC1</shortName>
    </alternativeName>
    <alternativeName>
        <fullName>Nuclear receptor subfamily 1 group C member 2</fullName>
    </alternativeName>
    <alternativeName>
        <fullName>Peroxisome proliferator-activated receptor beta</fullName>
        <shortName>PPAR-beta</shortName>
    </alternativeName>
</protein>
<comment type="function">
    <text evidence="1 7">Ligand-activated transcription factor key mediator of energy metabolism in adipose tissues (PubMed:35675826). Receptor that binds peroxisome proliferators such as hypolipidemic drugs and fatty acids. Has a preference for poly-unsaturated fatty acids, such as gamma-linoleic acid and eicosapentanoic acid. Once activated by a ligand, the receptor binds to promoter elements of target genes. Regulates the peroxisomal beta-oxidation pathway of fatty acids. Functions as transcription activator for the acyl-CoA oxidase gene. Decreases expression of NPC1L1 once activated by a ligand (By similarity).</text>
</comment>
<comment type="subunit">
    <text evidence="1 5 6">Heterodimer with the retinoid X receptor (By similarity). Interacts (via domain NR LBD) with CRY1 and CRY2 in a ligand-dependent manner (PubMed:28683290, PubMed:28751364).</text>
</comment>
<comment type="subcellular location">
    <subcellularLocation>
        <location evidence="7">Nucleus</location>
    </subcellularLocation>
</comment>
<comment type="tissue specificity">
    <text>Heart, adrenal and intestine.</text>
</comment>
<comment type="PTM">
    <text evidence="7">'Lys-48'-linked polyubiquitinated; leading to proteasomal degradation. Deubiquitinated and stabilized by OTUD3.</text>
</comment>
<comment type="similarity">
    <text evidence="8">Belongs to the nuclear hormone receptor family. NR1 subfamily.</text>
</comment>
<comment type="sequence caution" evidence="8">
    <conflict type="erroneous initiation">
        <sequence resource="EMBL-CDS" id="AAA03332"/>
    </conflict>
    <text>Extended N-terminus.</text>
</comment>
<reference key="1">
    <citation type="journal article" date="1995" name="J. Biol. Chem.">
        <title>Cloning of a protein that mediates transcriptional effects of fatty acids in preadipocytes. Homology to peroxisome proliferator-activated receptors.</title>
        <authorList>
            <person name="Amri E.-Z."/>
            <person name="Bonino F."/>
            <person name="Ailhaud G."/>
            <person name="Abumrad N.A."/>
            <person name="Grimaldi P.A."/>
        </authorList>
    </citation>
    <scope>NUCLEOTIDE SEQUENCE [MRNA]</scope>
    <source>
        <strain>C57BL/6J</strain>
        <tissue>Adipocyte</tissue>
    </source>
</reference>
<reference key="2">
    <citation type="journal article" date="1994" name="Proc. Natl. Acad. Sci. U.S.A.">
        <title>Differential expression and activation of a family of murine peroxisome proliferator-activated receptors.</title>
        <authorList>
            <person name="Kliewer S.A."/>
            <person name="Forman B.M."/>
            <person name="Blumberg B."/>
            <person name="Ong E.S."/>
            <person name="Borgmeyer U."/>
            <person name="Mangelsdorf D.J."/>
            <person name="Umesono K."/>
            <person name="Evans R.M."/>
        </authorList>
    </citation>
    <scope>NUCLEOTIDE SEQUENCE [MRNA]</scope>
    <source>
        <tissue>Liver</tissue>
    </source>
</reference>
<reference key="3">
    <citation type="journal article" date="2004" name="Genome Res.">
        <title>The status, quality, and expansion of the NIH full-length cDNA project: the Mammalian Gene Collection (MGC).</title>
        <authorList>
            <consortium name="The MGC Project Team"/>
        </authorList>
    </citation>
    <scope>NUCLEOTIDE SEQUENCE [LARGE SCALE MRNA]</scope>
    <source>
        <strain>C57BL/6J</strain>
        <tissue>Brain</tissue>
    </source>
</reference>
<reference key="4">
    <citation type="journal article" date="1993" name="Biochem. Biophys. Res. Commun.">
        <title>Identification of two mPPAR related receptors and evidence for the existence of five subfamily members.</title>
        <authorList>
            <person name="Chen F."/>
            <person name="Law S.W."/>
            <person name="O'Malley B.W."/>
        </authorList>
    </citation>
    <scope>NUCLEOTIDE SEQUENCE [MRNA] OF 1-145</scope>
    <source>
        <strain>BALB/cJ</strain>
        <tissue>Brain</tissue>
    </source>
</reference>
<reference key="5">
    <citation type="journal article" date="2017" name="Cell Metab.">
        <title>CRY1/2 selectively repress PPARdelta and limit exercise capacity.</title>
        <authorList>
            <person name="Jordan S.D."/>
            <person name="Kriebs A."/>
            <person name="Vaughan M."/>
            <person name="Duglan D."/>
            <person name="Fan W."/>
            <person name="Henriksson E."/>
            <person name="Huber A.L."/>
            <person name="Papp S.J."/>
            <person name="Nguyen M."/>
            <person name="Afetian M."/>
            <person name="Downes M."/>
            <person name="Yu R.T."/>
            <person name="Kralli A."/>
            <person name="Evans R.M."/>
            <person name="Lamia K.A."/>
        </authorList>
    </citation>
    <scope>INTERACTION WITH CRY1 AND CRY2</scope>
</reference>
<reference key="6">
    <citation type="journal article" date="2017" name="Proc. Natl. Acad. Sci. U.S.A.">
        <title>Circadian repressors CRY1 and CRY2 broadly interact with nuclear receptors and modulate transcriptional activity.</title>
        <authorList>
            <person name="Kriebs A."/>
            <person name="Jordan S.D."/>
            <person name="Soto E."/>
            <person name="Henriksson E."/>
            <person name="Sandate C.R."/>
            <person name="Vaughan M.E."/>
            <person name="Chan A.B."/>
            <person name="Duglan D."/>
            <person name="Papp S.J."/>
            <person name="Huber A.L."/>
            <person name="Afetian M.E."/>
            <person name="Yu R.T."/>
            <person name="Zhao X."/>
            <person name="Downes M."/>
            <person name="Evans R.M."/>
            <person name="Lamia K.A."/>
        </authorList>
    </citation>
    <scope>INTERACTION WITH CRY1 AND CRY2</scope>
</reference>
<reference key="7">
    <citation type="journal article" date="2022" name="Cell Metab.">
        <title>Deubiquitinase OTUD3 regulates metabolism homeostasis in response to nutritional stresses.</title>
        <authorList>
            <person name="Zhou N."/>
            <person name="Qi H."/>
            <person name="Liu J."/>
            <person name="Zhang G."/>
            <person name="Liu J."/>
            <person name="Liu N."/>
            <person name="Zhu M."/>
            <person name="Zhao X."/>
            <person name="Song C."/>
            <person name="Zhou Z."/>
            <person name="Gong J."/>
            <person name="Li R."/>
            <person name="Bai X."/>
            <person name="Jin Y."/>
            <person name="Song Y."/>
            <person name="Yin Y."/>
        </authorList>
    </citation>
    <scope>FUNCTION</scope>
    <scope>SUBCELLULAR LOCATION</scope>
    <scope>UBIQUITINATION</scope>
</reference>
<evidence type="ECO:0000250" key="1">
    <source>
        <dbReference type="UniProtKB" id="Q03181"/>
    </source>
</evidence>
<evidence type="ECO:0000255" key="2">
    <source>
        <dbReference type="PROSITE-ProRule" id="PRU00407"/>
    </source>
</evidence>
<evidence type="ECO:0000255" key="3">
    <source>
        <dbReference type="PROSITE-ProRule" id="PRU01189"/>
    </source>
</evidence>
<evidence type="ECO:0000256" key="4">
    <source>
        <dbReference type="SAM" id="MobiDB-lite"/>
    </source>
</evidence>
<evidence type="ECO:0000269" key="5">
    <source>
    </source>
</evidence>
<evidence type="ECO:0000269" key="6">
    <source>
    </source>
</evidence>
<evidence type="ECO:0000269" key="7">
    <source>
    </source>
</evidence>
<evidence type="ECO:0000305" key="8"/>
<keyword id="KW-0010">Activator</keyword>
<keyword id="KW-0238">DNA-binding</keyword>
<keyword id="KW-0479">Metal-binding</keyword>
<keyword id="KW-0539">Nucleus</keyword>
<keyword id="KW-0675">Receptor</keyword>
<keyword id="KW-1185">Reference proteome</keyword>
<keyword id="KW-0804">Transcription</keyword>
<keyword id="KW-0805">Transcription regulation</keyword>
<keyword id="KW-0832">Ubl conjugation</keyword>
<keyword id="KW-0862">Zinc</keyword>
<keyword id="KW-0863">Zinc-finger</keyword>
<gene>
    <name type="primary">Ppard</name>
    <name type="synonym">Nr1c2</name>
    <name type="synonym">Pparb</name>
</gene>
<name>PPARD_MOUSE</name>
<dbReference type="EMBL" id="L28116">
    <property type="protein sequence ID" value="AAA63394.1"/>
    <property type="molecule type" value="mRNA"/>
</dbReference>
<dbReference type="EMBL" id="U10375">
    <property type="protein sequence ID" value="AAA19972.1"/>
    <property type="molecule type" value="mRNA"/>
</dbReference>
<dbReference type="EMBL" id="BC070398">
    <property type="protein sequence ID" value="AAH70398.1"/>
    <property type="molecule type" value="mRNA"/>
</dbReference>
<dbReference type="EMBL" id="U01665">
    <property type="protein sequence ID" value="AAA03332.1"/>
    <property type="status" value="ALT_INIT"/>
    <property type="molecule type" value="mRNA"/>
</dbReference>
<dbReference type="CCDS" id="CCDS28575.1"/>
<dbReference type="PIR" id="I55442">
    <property type="entry name" value="I55442"/>
</dbReference>
<dbReference type="RefSeq" id="NP_001398439.1">
    <property type="nucleotide sequence ID" value="NM_001411510.1"/>
</dbReference>
<dbReference type="RefSeq" id="NP_001398455.1">
    <property type="nucleotide sequence ID" value="NM_001411526.1"/>
</dbReference>
<dbReference type="RefSeq" id="NP_035275.1">
    <property type="nucleotide sequence ID" value="NM_011145.4"/>
</dbReference>
<dbReference type="SMR" id="P35396"/>
<dbReference type="BioGRID" id="202319">
    <property type="interactions" value="13"/>
</dbReference>
<dbReference type="CORUM" id="P35396"/>
<dbReference type="DIP" id="DIP-29851N"/>
<dbReference type="FunCoup" id="P35396">
    <property type="interactions" value="1364"/>
</dbReference>
<dbReference type="IntAct" id="P35396">
    <property type="interactions" value="6"/>
</dbReference>
<dbReference type="STRING" id="10090.ENSMUSP00000002320"/>
<dbReference type="BindingDB" id="P35396"/>
<dbReference type="ChEMBL" id="CHEMBL2458"/>
<dbReference type="SwissLipids" id="SLP:000000397"/>
<dbReference type="PhosphoSitePlus" id="P35396"/>
<dbReference type="PaxDb" id="10090-ENSMUSP00000002320"/>
<dbReference type="ProteomicsDB" id="291646"/>
<dbReference type="Antibodypedia" id="4322">
    <property type="antibodies" value="635 antibodies from 42 providers"/>
</dbReference>
<dbReference type="DNASU" id="19015"/>
<dbReference type="Ensembl" id="ENSMUST00000002320.16">
    <property type="protein sequence ID" value="ENSMUSP00000002320.9"/>
    <property type="gene ID" value="ENSMUSG00000002250.17"/>
</dbReference>
<dbReference type="GeneID" id="19015"/>
<dbReference type="KEGG" id="mmu:19015"/>
<dbReference type="UCSC" id="uc008bqk.1">
    <property type="organism name" value="mouse"/>
</dbReference>
<dbReference type="AGR" id="MGI:101884"/>
<dbReference type="CTD" id="5467"/>
<dbReference type="MGI" id="MGI:101884">
    <property type="gene designation" value="Ppard"/>
</dbReference>
<dbReference type="VEuPathDB" id="HostDB:ENSMUSG00000002250"/>
<dbReference type="eggNOG" id="KOG3575">
    <property type="taxonomic scope" value="Eukaryota"/>
</dbReference>
<dbReference type="GeneTree" id="ENSGT00940000156676"/>
<dbReference type="HOGENOM" id="CLU_007368_4_1_1"/>
<dbReference type="InParanoid" id="P35396"/>
<dbReference type="OMA" id="YEKCDRS"/>
<dbReference type="OrthoDB" id="7634782at2759"/>
<dbReference type="PhylomeDB" id="P35396"/>
<dbReference type="TreeFam" id="TF316304"/>
<dbReference type="Reactome" id="R-MMU-200425">
    <property type="pathway name" value="Carnitine shuttle"/>
</dbReference>
<dbReference type="Reactome" id="R-MMU-383280">
    <property type="pathway name" value="Nuclear Receptor transcription pathway"/>
</dbReference>
<dbReference type="Reactome" id="R-MMU-5362517">
    <property type="pathway name" value="Signaling by Retinoic Acid"/>
</dbReference>
<dbReference type="BioGRID-ORCS" id="19015">
    <property type="hits" value="5 hits in 79 CRISPR screens"/>
</dbReference>
<dbReference type="ChiTaRS" id="Ppard">
    <property type="organism name" value="mouse"/>
</dbReference>
<dbReference type="PRO" id="PR:P35396"/>
<dbReference type="Proteomes" id="UP000000589">
    <property type="component" value="Chromosome 17"/>
</dbReference>
<dbReference type="RNAct" id="P35396">
    <property type="molecule type" value="protein"/>
</dbReference>
<dbReference type="Bgee" id="ENSMUSG00000002250">
    <property type="expression patterns" value="Expressed in ectoplacental cone and 174 other cell types or tissues"/>
</dbReference>
<dbReference type="ExpressionAtlas" id="P35396">
    <property type="expression patterns" value="baseline and differential"/>
</dbReference>
<dbReference type="GO" id="GO:0000785">
    <property type="term" value="C:chromatin"/>
    <property type="evidence" value="ECO:0000314"/>
    <property type="project" value="BHF-UCL"/>
</dbReference>
<dbReference type="GO" id="GO:0005634">
    <property type="term" value="C:nucleus"/>
    <property type="evidence" value="ECO:0000314"/>
    <property type="project" value="MGI"/>
</dbReference>
<dbReference type="GO" id="GO:0003677">
    <property type="term" value="F:DNA binding"/>
    <property type="evidence" value="ECO:0000314"/>
    <property type="project" value="MGI"/>
</dbReference>
<dbReference type="GO" id="GO:0001227">
    <property type="term" value="F:DNA-binding transcription repressor activity, RNA polymerase II-specific"/>
    <property type="evidence" value="ECO:0000314"/>
    <property type="project" value="BHF-UCL"/>
</dbReference>
<dbReference type="GO" id="GO:0008047">
    <property type="term" value="F:enzyme activator activity"/>
    <property type="evidence" value="ECO:0000304"/>
    <property type="project" value="UniProtKB"/>
</dbReference>
<dbReference type="GO" id="GO:0070539">
    <property type="term" value="F:linoleic acid binding"/>
    <property type="evidence" value="ECO:0000250"/>
    <property type="project" value="UniProtKB"/>
</dbReference>
<dbReference type="GO" id="GO:0008289">
    <property type="term" value="F:lipid binding"/>
    <property type="evidence" value="ECO:0000250"/>
    <property type="project" value="UniProtKB"/>
</dbReference>
<dbReference type="GO" id="GO:0051059">
    <property type="term" value="F:NF-kappaB binding"/>
    <property type="evidence" value="ECO:0007669"/>
    <property type="project" value="Ensembl"/>
</dbReference>
<dbReference type="GO" id="GO:0004879">
    <property type="term" value="F:nuclear receptor activity"/>
    <property type="evidence" value="ECO:0000250"/>
    <property type="project" value="UniProtKB"/>
</dbReference>
<dbReference type="GO" id="GO:0016501">
    <property type="term" value="F:prostacyclin receptor activity"/>
    <property type="evidence" value="ECO:0000304"/>
    <property type="project" value="UniProtKB"/>
</dbReference>
<dbReference type="GO" id="GO:1990837">
    <property type="term" value="F:sequence-specific double-stranded DNA binding"/>
    <property type="evidence" value="ECO:0007669"/>
    <property type="project" value="Ensembl"/>
</dbReference>
<dbReference type="GO" id="GO:0001223">
    <property type="term" value="F:transcription coactivator binding"/>
    <property type="evidence" value="ECO:0007669"/>
    <property type="project" value="Ensembl"/>
</dbReference>
<dbReference type="GO" id="GO:0008270">
    <property type="term" value="F:zinc ion binding"/>
    <property type="evidence" value="ECO:0007669"/>
    <property type="project" value="UniProtKB-KW"/>
</dbReference>
<dbReference type="GO" id="GO:0060612">
    <property type="term" value="P:adipose tissue development"/>
    <property type="evidence" value="ECO:0000315"/>
    <property type="project" value="MGI"/>
</dbReference>
<dbReference type="GO" id="GO:0097190">
    <property type="term" value="P:apoptotic signaling pathway"/>
    <property type="evidence" value="ECO:0007669"/>
    <property type="project" value="Ensembl"/>
</dbReference>
<dbReference type="GO" id="GO:0008366">
    <property type="term" value="P:axon ensheathment"/>
    <property type="evidence" value="ECO:0000315"/>
    <property type="project" value="MGI"/>
</dbReference>
<dbReference type="GO" id="GO:0030154">
    <property type="term" value="P:cell differentiation"/>
    <property type="evidence" value="ECO:0000314"/>
    <property type="project" value="MGI"/>
</dbReference>
<dbReference type="GO" id="GO:0008283">
    <property type="term" value="P:cell population proliferation"/>
    <property type="evidence" value="ECO:0000315"/>
    <property type="project" value="MGI"/>
</dbReference>
<dbReference type="GO" id="GO:0031589">
    <property type="term" value="P:cell-substrate adhesion"/>
    <property type="evidence" value="ECO:0000315"/>
    <property type="project" value="MGI"/>
</dbReference>
<dbReference type="GO" id="GO:0071456">
    <property type="term" value="P:cellular response to hypoxia"/>
    <property type="evidence" value="ECO:0000316"/>
    <property type="project" value="MGI"/>
</dbReference>
<dbReference type="GO" id="GO:0071222">
    <property type="term" value="P:cellular response to lipopolysaccharide"/>
    <property type="evidence" value="ECO:0007669"/>
    <property type="project" value="Ensembl"/>
</dbReference>
<dbReference type="GO" id="GO:0031669">
    <property type="term" value="P:cellular response to nutrient levels"/>
    <property type="evidence" value="ECO:0007669"/>
    <property type="project" value="Ensembl"/>
</dbReference>
<dbReference type="GO" id="GO:0046697">
    <property type="term" value="P:decidualization"/>
    <property type="evidence" value="ECO:0007669"/>
    <property type="project" value="Ensembl"/>
</dbReference>
<dbReference type="GO" id="GO:0007566">
    <property type="term" value="P:embryo implantation"/>
    <property type="evidence" value="ECO:0000314"/>
    <property type="project" value="MGI"/>
</dbReference>
<dbReference type="GO" id="GO:0097009">
    <property type="term" value="P:energy homeostasis"/>
    <property type="evidence" value="ECO:0000315"/>
    <property type="project" value="BHF-UCL"/>
</dbReference>
<dbReference type="GO" id="GO:0008544">
    <property type="term" value="P:epidermis development"/>
    <property type="evidence" value="ECO:0000304"/>
    <property type="project" value="MGI"/>
</dbReference>
<dbReference type="GO" id="GO:0050673">
    <property type="term" value="P:epithelial cell proliferation"/>
    <property type="evidence" value="ECO:0000316"/>
    <property type="project" value="MGI"/>
</dbReference>
<dbReference type="GO" id="GO:0070341">
    <property type="term" value="P:fat cell proliferation"/>
    <property type="evidence" value="ECO:0000315"/>
    <property type="project" value="MGI"/>
</dbReference>
<dbReference type="GO" id="GO:0006635">
    <property type="term" value="P:fatty acid beta-oxidation"/>
    <property type="evidence" value="ECO:0000270"/>
    <property type="project" value="UniProtKB"/>
</dbReference>
<dbReference type="GO" id="GO:0015908">
    <property type="term" value="P:fatty acid transport"/>
    <property type="evidence" value="ECO:0000270"/>
    <property type="project" value="UniProtKB"/>
</dbReference>
<dbReference type="GO" id="GO:0007507">
    <property type="term" value="P:heart development"/>
    <property type="evidence" value="ECO:0007669"/>
    <property type="project" value="Ensembl"/>
</dbReference>
<dbReference type="GO" id="GO:0051546">
    <property type="term" value="P:keratinocyte migration"/>
    <property type="evidence" value="ECO:0000315"/>
    <property type="project" value="MGI"/>
</dbReference>
<dbReference type="GO" id="GO:0043616">
    <property type="term" value="P:keratinocyte proliferation"/>
    <property type="evidence" value="ECO:0000315"/>
    <property type="project" value="MGI"/>
</dbReference>
<dbReference type="GO" id="GO:0006629">
    <property type="term" value="P:lipid metabolic process"/>
    <property type="evidence" value="ECO:0000315"/>
    <property type="project" value="MGI"/>
</dbReference>
<dbReference type="GO" id="GO:0043066">
    <property type="term" value="P:negative regulation of apoptotic process"/>
    <property type="evidence" value="ECO:0007669"/>
    <property type="project" value="Ensembl"/>
</dbReference>
<dbReference type="GO" id="GO:0030308">
    <property type="term" value="P:negative regulation of cell growth"/>
    <property type="evidence" value="ECO:0007669"/>
    <property type="project" value="Ensembl"/>
</dbReference>
<dbReference type="GO" id="GO:0032966">
    <property type="term" value="P:negative regulation of collagen biosynthetic process"/>
    <property type="evidence" value="ECO:0007669"/>
    <property type="project" value="Ensembl"/>
</dbReference>
<dbReference type="GO" id="GO:0050680">
    <property type="term" value="P:negative regulation of epithelial cell proliferation"/>
    <property type="evidence" value="ECO:0000316"/>
    <property type="project" value="MGI"/>
</dbReference>
<dbReference type="GO" id="GO:1902894">
    <property type="term" value="P:negative regulation of miRNA transcription"/>
    <property type="evidence" value="ECO:0000314"/>
    <property type="project" value="BHF-UCL"/>
</dbReference>
<dbReference type="GO" id="GO:0045662">
    <property type="term" value="P:negative regulation of myoblast differentiation"/>
    <property type="evidence" value="ECO:0000315"/>
    <property type="project" value="CACAO"/>
</dbReference>
<dbReference type="GO" id="GO:0014912">
    <property type="term" value="P:negative regulation of smooth muscle cell migration"/>
    <property type="evidence" value="ECO:0007669"/>
    <property type="project" value="Ensembl"/>
</dbReference>
<dbReference type="GO" id="GO:0048662">
    <property type="term" value="P:negative regulation of smooth muscle cell proliferation"/>
    <property type="evidence" value="ECO:0007669"/>
    <property type="project" value="Ensembl"/>
</dbReference>
<dbReference type="GO" id="GO:0000122">
    <property type="term" value="P:negative regulation of transcription by RNA polymerase II"/>
    <property type="evidence" value="ECO:0000314"/>
    <property type="project" value="MGI"/>
</dbReference>
<dbReference type="GO" id="GO:0043491">
    <property type="term" value="P:phosphatidylinositol 3-kinase/protein kinase B signal transduction"/>
    <property type="evidence" value="ECO:0000314"/>
    <property type="project" value="MGI"/>
</dbReference>
<dbReference type="GO" id="GO:0008654">
    <property type="term" value="P:phospholipid biosynthetic process"/>
    <property type="evidence" value="ECO:0007669"/>
    <property type="project" value="Ensembl"/>
</dbReference>
<dbReference type="GO" id="GO:0001890">
    <property type="term" value="P:placenta development"/>
    <property type="evidence" value="ECO:0000315"/>
    <property type="project" value="MGI"/>
</dbReference>
<dbReference type="GO" id="GO:0045893">
    <property type="term" value="P:positive regulation of DNA-templated transcription"/>
    <property type="evidence" value="ECO:0000250"/>
    <property type="project" value="UniProtKB"/>
</dbReference>
<dbReference type="GO" id="GO:0045684">
    <property type="term" value="P:positive regulation of epidermis development"/>
    <property type="evidence" value="ECO:0007669"/>
    <property type="project" value="Ensembl"/>
</dbReference>
<dbReference type="GO" id="GO:0070346">
    <property type="term" value="P:positive regulation of fat cell proliferation"/>
    <property type="evidence" value="ECO:0000315"/>
    <property type="project" value="MGI"/>
</dbReference>
<dbReference type="GO" id="GO:0046321">
    <property type="term" value="P:positive regulation of fatty acid oxidation"/>
    <property type="evidence" value="ECO:0007669"/>
    <property type="project" value="Ensembl"/>
</dbReference>
<dbReference type="GO" id="GO:0010628">
    <property type="term" value="P:positive regulation of gene expression"/>
    <property type="evidence" value="ECO:0000315"/>
    <property type="project" value="CACAO"/>
</dbReference>
<dbReference type="GO" id="GO:0035774">
    <property type="term" value="P:positive regulation of insulin secretion involved in cellular response to glucose stimulus"/>
    <property type="evidence" value="ECO:0007669"/>
    <property type="project" value="Ensembl"/>
</dbReference>
<dbReference type="GO" id="GO:2000288">
    <property type="term" value="P:positive regulation of myoblast proliferation"/>
    <property type="evidence" value="ECO:0000315"/>
    <property type="project" value="CACAO"/>
</dbReference>
<dbReference type="GO" id="GO:0051897">
    <property type="term" value="P:positive regulation of phosphatidylinositol 3-kinase/protein kinase B signal transduction"/>
    <property type="evidence" value="ECO:0000314"/>
    <property type="project" value="MGI"/>
</dbReference>
<dbReference type="GO" id="GO:0043415">
    <property type="term" value="P:positive regulation of skeletal muscle tissue regeneration"/>
    <property type="evidence" value="ECO:0000315"/>
    <property type="project" value="CACAO"/>
</dbReference>
<dbReference type="GO" id="GO:0006029">
    <property type="term" value="P:proteoglycan metabolic process"/>
    <property type="evidence" value="ECO:0007669"/>
    <property type="project" value="Ensembl"/>
</dbReference>
<dbReference type="GO" id="GO:0042127">
    <property type="term" value="P:regulation of cell population proliferation"/>
    <property type="evidence" value="ECO:0000316"/>
    <property type="project" value="MGI"/>
</dbReference>
<dbReference type="GO" id="GO:0050678">
    <property type="term" value="P:regulation of epithelial cell proliferation"/>
    <property type="evidence" value="ECO:0000315"/>
    <property type="project" value="MGI"/>
</dbReference>
<dbReference type="GO" id="GO:0045598">
    <property type="term" value="P:regulation of fat cell differentiation"/>
    <property type="evidence" value="ECO:0000315"/>
    <property type="project" value="MGI"/>
</dbReference>
<dbReference type="GO" id="GO:0050796">
    <property type="term" value="P:regulation of insulin secretion"/>
    <property type="evidence" value="ECO:0000303"/>
    <property type="project" value="UniProtKB"/>
</dbReference>
<dbReference type="GO" id="GO:0014842">
    <property type="term" value="P:regulation of skeletal muscle satellite cell proliferation"/>
    <property type="evidence" value="ECO:0000315"/>
    <property type="project" value="CACAO"/>
</dbReference>
<dbReference type="GO" id="GO:0014823">
    <property type="term" value="P:response to activity"/>
    <property type="evidence" value="ECO:0007669"/>
    <property type="project" value="Ensembl"/>
</dbReference>
<dbReference type="GO" id="GO:0009749">
    <property type="term" value="P:response to glucose"/>
    <property type="evidence" value="ECO:0007669"/>
    <property type="project" value="Ensembl"/>
</dbReference>
<dbReference type="GO" id="GO:0033189">
    <property type="term" value="P:response to vitamin A"/>
    <property type="evidence" value="ECO:0007669"/>
    <property type="project" value="Ensembl"/>
</dbReference>
<dbReference type="GO" id="GO:0042311">
    <property type="term" value="P:vasodilation"/>
    <property type="evidence" value="ECO:0007669"/>
    <property type="project" value="Ensembl"/>
</dbReference>
<dbReference type="GO" id="GO:0042060">
    <property type="term" value="P:wound healing"/>
    <property type="evidence" value="ECO:0000315"/>
    <property type="project" value="MGI"/>
</dbReference>
<dbReference type="CDD" id="cd06965">
    <property type="entry name" value="NR_DBD_Ppar"/>
    <property type="match status" value="1"/>
</dbReference>
<dbReference type="CDD" id="cd06932">
    <property type="entry name" value="NR_LBD_PPAR"/>
    <property type="match status" value="1"/>
</dbReference>
<dbReference type="FunFam" id="1.10.565.10:FF:000013">
    <property type="entry name" value="Peroxisome proliferator-activated receptor delta"/>
    <property type="match status" value="1"/>
</dbReference>
<dbReference type="FunFam" id="3.30.50.10:FF:000010">
    <property type="entry name" value="Peroxisome proliferator-activated receptor gamma"/>
    <property type="match status" value="1"/>
</dbReference>
<dbReference type="Gene3D" id="3.30.50.10">
    <property type="entry name" value="Erythroid Transcription Factor GATA-1, subunit A"/>
    <property type="match status" value="1"/>
</dbReference>
<dbReference type="Gene3D" id="1.10.565.10">
    <property type="entry name" value="Retinoid X Receptor"/>
    <property type="match status" value="1"/>
</dbReference>
<dbReference type="InterPro" id="IPR003074">
    <property type="entry name" value="1Cnucl_rcpt"/>
</dbReference>
<dbReference type="InterPro" id="IPR003075">
    <property type="entry name" value="1Cnucl_rcpt_B"/>
</dbReference>
<dbReference type="InterPro" id="IPR035500">
    <property type="entry name" value="NHR-like_dom_sf"/>
</dbReference>
<dbReference type="InterPro" id="IPR000536">
    <property type="entry name" value="Nucl_hrmn_rcpt_lig-bd"/>
</dbReference>
<dbReference type="InterPro" id="IPR050234">
    <property type="entry name" value="Nuclear_hormone_rcpt_NR1"/>
</dbReference>
<dbReference type="InterPro" id="IPR001723">
    <property type="entry name" value="Nuclear_hrmn_rcpt"/>
</dbReference>
<dbReference type="InterPro" id="IPR001628">
    <property type="entry name" value="Znf_hrmn_rcpt"/>
</dbReference>
<dbReference type="InterPro" id="IPR013088">
    <property type="entry name" value="Znf_NHR/GATA"/>
</dbReference>
<dbReference type="PANTHER" id="PTHR24082">
    <property type="entry name" value="NUCLEAR HORMONE RECEPTOR"/>
    <property type="match status" value="1"/>
</dbReference>
<dbReference type="PANTHER" id="PTHR24082:SF15">
    <property type="entry name" value="PEROXISOME PROLIFERATOR-ACTIVATED RECEPTOR DELTA"/>
    <property type="match status" value="1"/>
</dbReference>
<dbReference type="Pfam" id="PF00104">
    <property type="entry name" value="Hormone_recep"/>
    <property type="match status" value="1"/>
</dbReference>
<dbReference type="Pfam" id="PF00105">
    <property type="entry name" value="zf-C4"/>
    <property type="match status" value="1"/>
</dbReference>
<dbReference type="PRINTS" id="PR01288">
    <property type="entry name" value="PROXISOMEPAR"/>
</dbReference>
<dbReference type="PRINTS" id="PR01290">
    <property type="entry name" value="PROXISOMPABR"/>
</dbReference>
<dbReference type="PRINTS" id="PR00398">
    <property type="entry name" value="STRDHORMONER"/>
</dbReference>
<dbReference type="PRINTS" id="PR00047">
    <property type="entry name" value="STROIDFINGER"/>
</dbReference>
<dbReference type="SMART" id="SM00430">
    <property type="entry name" value="HOLI"/>
    <property type="match status" value="1"/>
</dbReference>
<dbReference type="SMART" id="SM00399">
    <property type="entry name" value="ZnF_C4"/>
    <property type="match status" value="1"/>
</dbReference>
<dbReference type="SUPFAM" id="SSF57716">
    <property type="entry name" value="Glucocorticoid receptor-like (DNA-binding domain)"/>
    <property type="match status" value="1"/>
</dbReference>
<dbReference type="SUPFAM" id="SSF48508">
    <property type="entry name" value="Nuclear receptor ligand-binding domain"/>
    <property type="match status" value="1"/>
</dbReference>
<dbReference type="PROSITE" id="PS51843">
    <property type="entry name" value="NR_LBD"/>
    <property type="match status" value="1"/>
</dbReference>
<dbReference type="PROSITE" id="PS00031">
    <property type="entry name" value="NUCLEAR_REC_DBD_1"/>
    <property type="match status" value="1"/>
</dbReference>
<dbReference type="PROSITE" id="PS51030">
    <property type="entry name" value="NUCLEAR_REC_DBD_2"/>
    <property type="match status" value="1"/>
</dbReference>